<reference key="1">
    <citation type="journal article" date="2001" name="Cell">
        <title>A diverse family of GPCRs expressed in specific subsets of nociceptive sensory neurons.</title>
        <authorList>
            <person name="Dong X."/>
            <person name="Han S.-K."/>
            <person name="Zylka M.J."/>
            <person name="Simon M.I."/>
            <person name="Anderson D.J."/>
        </authorList>
    </citation>
    <scope>NUCLEOTIDE SEQUENCE [GENOMIC DNA]</scope>
    <source>
        <strain>C57BL/6J</strain>
    </source>
</reference>
<reference key="2">
    <citation type="journal article" date="2005" name="Science">
        <title>The transcriptional landscape of the mammalian genome.</title>
        <authorList>
            <person name="Carninci P."/>
            <person name="Kasukawa T."/>
            <person name="Katayama S."/>
            <person name="Gough J."/>
            <person name="Frith M.C."/>
            <person name="Maeda N."/>
            <person name="Oyama R."/>
            <person name="Ravasi T."/>
            <person name="Lenhard B."/>
            <person name="Wells C."/>
            <person name="Kodzius R."/>
            <person name="Shimokawa K."/>
            <person name="Bajic V.B."/>
            <person name="Brenner S.E."/>
            <person name="Batalov S."/>
            <person name="Forrest A.R."/>
            <person name="Zavolan M."/>
            <person name="Davis M.J."/>
            <person name="Wilming L.G."/>
            <person name="Aidinis V."/>
            <person name="Allen J.E."/>
            <person name="Ambesi-Impiombato A."/>
            <person name="Apweiler R."/>
            <person name="Aturaliya R.N."/>
            <person name="Bailey T.L."/>
            <person name="Bansal M."/>
            <person name="Baxter L."/>
            <person name="Beisel K.W."/>
            <person name="Bersano T."/>
            <person name="Bono H."/>
            <person name="Chalk A.M."/>
            <person name="Chiu K.P."/>
            <person name="Choudhary V."/>
            <person name="Christoffels A."/>
            <person name="Clutterbuck D.R."/>
            <person name="Crowe M.L."/>
            <person name="Dalla E."/>
            <person name="Dalrymple B.P."/>
            <person name="de Bono B."/>
            <person name="Della Gatta G."/>
            <person name="di Bernardo D."/>
            <person name="Down T."/>
            <person name="Engstrom P."/>
            <person name="Fagiolini M."/>
            <person name="Faulkner G."/>
            <person name="Fletcher C.F."/>
            <person name="Fukushima T."/>
            <person name="Furuno M."/>
            <person name="Futaki S."/>
            <person name="Gariboldi M."/>
            <person name="Georgii-Hemming P."/>
            <person name="Gingeras T.R."/>
            <person name="Gojobori T."/>
            <person name="Green R.E."/>
            <person name="Gustincich S."/>
            <person name="Harbers M."/>
            <person name="Hayashi Y."/>
            <person name="Hensch T.K."/>
            <person name="Hirokawa N."/>
            <person name="Hill D."/>
            <person name="Huminiecki L."/>
            <person name="Iacono M."/>
            <person name="Ikeo K."/>
            <person name="Iwama A."/>
            <person name="Ishikawa T."/>
            <person name="Jakt M."/>
            <person name="Kanapin A."/>
            <person name="Katoh M."/>
            <person name="Kawasawa Y."/>
            <person name="Kelso J."/>
            <person name="Kitamura H."/>
            <person name="Kitano H."/>
            <person name="Kollias G."/>
            <person name="Krishnan S.P."/>
            <person name="Kruger A."/>
            <person name="Kummerfeld S.K."/>
            <person name="Kurochkin I.V."/>
            <person name="Lareau L.F."/>
            <person name="Lazarevic D."/>
            <person name="Lipovich L."/>
            <person name="Liu J."/>
            <person name="Liuni S."/>
            <person name="McWilliam S."/>
            <person name="Madan Babu M."/>
            <person name="Madera M."/>
            <person name="Marchionni L."/>
            <person name="Matsuda H."/>
            <person name="Matsuzawa S."/>
            <person name="Miki H."/>
            <person name="Mignone F."/>
            <person name="Miyake S."/>
            <person name="Morris K."/>
            <person name="Mottagui-Tabar S."/>
            <person name="Mulder N."/>
            <person name="Nakano N."/>
            <person name="Nakauchi H."/>
            <person name="Ng P."/>
            <person name="Nilsson R."/>
            <person name="Nishiguchi S."/>
            <person name="Nishikawa S."/>
            <person name="Nori F."/>
            <person name="Ohara O."/>
            <person name="Okazaki Y."/>
            <person name="Orlando V."/>
            <person name="Pang K.C."/>
            <person name="Pavan W.J."/>
            <person name="Pavesi G."/>
            <person name="Pesole G."/>
            <person name="Petrovsky N."/>
            <person name="Piazza S."/>
            <person name="Reed J."/>
            <person name="Reid J.F."/>
            <person name="Ring B.Z."/>
            <person name="Ringwald M."/>
            <person name="Rost B."/>
            <person name="Ruan Y."/>
            <person name="Salzberg S.L."/>
            <person name="Sandelin A."/>
            <person name="Schneider C."/>
            <person name="Schoenbach C."/>
            <person name="Sekiguchi K."/>
            <person name="Semple C.A."/>
            <person name="Seno S."/>
            <person name="Sessa L."/>
            <person name="Sheng Y."/>
            <person name="Shibata Y."/>
            <person name="Shimada H."/>
            <person name="Shimada K."/>
            <person name="Silva D."/>
            <person name="Sinclair B."/>
            <person name="Sperling S."/>
            <person name="Stupka E."/>
            <person name="Sugiura K."/>
            <person name="Sultana R."/>
            <person name="Takenaka Y."/>
            <person name="Taki K."/>
            <person name="Tammoja K."/>
            <person name="Tan S.L."/>
            <person name="Tang S."/>
            <person name="Taylor M.S."/>
            <person name="Tegner J."/>
            <person name="Teichmann S.A."/>
            <person name="Ueda H.R."/>
            <person name="van Nimwegen E."/>
            <person name="Verardo R."/>
            <person name="Wei C.L."/>
            <person name="Yagi K."/>
            <person name="Yamanishi H."/>
            <person name="Zabarovsky E."/>
            <person name="Zhu S."/>
            <person name="Zimmer A."/>
            <person name="Hide W."/>
            <person name="Bult C."/>
            <person name="Grimmond S.M."/>
            <person name="Teasdale R.D."/>
            <person name="Liu E.T."/>
            <person name="Brusic V."/>
            <person name="Quackenbush J."/>
            <person name="Wahlestedt C."/>
            <person name="Mattick J.S."/>
            <person name="Hume D.A."/>
            <person name="Kai C."/>
            <person name="Sasaki D."/>
            <person name="Tomaru Y."/>
            <person name="Fukuda S."/>
            <person name="Kanamori-Katayama M."/>
            <person name="Suzuki M."/>
            <person name="Aoki J."/>
            <person name="Arakawa T."/>
            <person name="Iida J."/>
            <person name="Imamura K."/>
            <person name="Itoh M."/>
            <person name="Kato T."/>
            <person name="Kawaji H."/>
            <person name="Kawagashira N."/>
            <person name="Kawashima T."/>
            <person name="Kojima M."/>
            <person name="Kondo S."/>
            <person name="Konno H."/>
            <person name="Nakano K."/>
            <person name="Ninomiya N."/>
            <person name="Nishio T."/>
            <person name="Okada M."/>
            <person name="Plessy C."/>
            <person name="Shibata K."/>
            <person name="Shiraki T."/>
            <person name="Suzuki S."/>
            <person name="Tagami M."/>
            <person name="Waki K."/>
            <person name="Watahiki A."/>
            <person name="Okamura-Oho Y."/>
            <person name="Suzuki H."/>
            <person name="Kawai J."/>
            <person name="Hayashizaki Y."/>
        </authorList>
    </citation>
    <scope>NUCLEOTIDE SEQUENCE [LARGE SCALE MRNA]</scope>
    <source>
        <strain>C57BL/6J</strain>
        <tissue>Head</tissue>
    </source>
</reference>
<reference key="3">
    <citation type="journal article" date="2004" name="Genome Res.">
        <title>The status, quality, and expansion of the NIH full-length cDNA project: the Mammalian Gene Collection (MGC).</title>
        <authorList>
            <consortium name="The MGC Project Team"/>
        </authorList>
    </citation>
    <scope>NUCLEOTIDE SEQUENCE [LARGE SCALE MRNA]</scope>
</reference>
<reference key="4">
    <citation type="journal article" date="2015" name="Nature">
        <title>Identification of a mast-cell-specific receptor crucial for pseudo-allergic drug reactions.</title>
        <authorList>
            <person name="McNeil B.D."/>
            <person name="Pundir P."/>
            <person name="Meeker S."/>
            <person name="Han L."/>
            <person name="Undem B.J."/>
            <person name="Kulka M."/>
            <person name="Dong X."/>
        </authorList>
    </citation>
    <scope>FUNCTION</scope>
    <scope>TISSUE SPECIFICITY</scope>
    <scope>DISRUPTION PHENOTYPE</scope>
</reference>
<organism>
    <name type="scientific">Mus musculus</name>
    <name type="common">Mouse</name>
    <dbReference type="NCBI Taxonomy" id="10090"/>
    <lineage>
        <taxon>Eukaryota</taxon>
        <taxon>Metazoa</taxon>
        <taxon>Chordata</taxon>
        <taxon>Craniata</taxon>
        <taxon>Vertebrata</taxon>
        <taxon>Euteleostomi</taxon>
        <taxon>Mammalia</taxon>
        <taxon>Eutheria</taxon>
        <taxon>Euarchontoglires</taxon>
        <taxon>Glires</taxon>
        <taxon>Rodentia</taxon>
        <taxon>Myomorpha</taxon>
        <taxon>Muroidea</taxon>
        <taxon>Muridae</taxon>
        <taxon>Murinae</taxon>
        <taxon>Mus</taxon>
        <taxon>Mus</taxon>
    </lineage>
</organism>
<proteinExistence type="evidence at transcript level"/>
<dbReference type="EMBL" id="AY042200">
    <property type="protein sequence ID" value="AAK91796.1"/>
    <property type="molecule type" value="Genomic_DNA"/>
</dbReference>
<dbReference type="EMBL" id="AK029369">
    <property type="protein sequence ID" value="BAC26422.1"/>
    <property type="molecule type" value="mRNA"/>
</dbReference>
<dbReference type="EMBL" id="BC107390">
    <property type="protein sequence ID" value="AAI07391.1"/>
    <property type="molecule type" value="mRNA"/>
</dbReference>
<dbReference type="EMBL" id="BC107391">
    <property type="protein sequence ID" value="AAI07392.1"/>
    <property type="molecule type" value="mRNA"/>
</dbReference>
<dbReference type="CCDS" id="CCDS21303.1"/>
<dbReference type="RefSeq" id="NP_780740.2">
    <property type="nucleotide sequence ID" value="NM_175531.4"/>
</dbReference>
<dbReference type="SMR" id="Q3KNA1"/>
<dbReference type="FunCoup" id="Q3KNA1">
    <property type="interactions" value="72"/>
</dbReference>
<dbReference type="STRING" id="10090.ENSMUSP00000061878"/>
<dbReference type="ChEMBL" id="CHEMBL5169153"/>
<dbReference type="GlyCosmos" id="Q3KNA1">
    <property type="glycosylation" value="3 sites, No reported glycans"/>
</dbReference>
<dbReference type="GlyGen" id="Q3KNA1">
    <property type="glycosylation" value="3 sites"/>
</dbReference>
<dbReference type="iPTMnet" id="Q3KNA1"/>
<dbReference type="PhosphoSitePlus" id="Q3KNA1"/>
<dbReference type="PaxDb" id="10090-ENSMUSP00000061878"/>
<dbReference type="DNASU" id="243979"/>
<dbReference type="Ensembl" id="ENSMUST00000052730.3">
    <property type="protein sequence ID" value="ENSMUSP00000061878.2"/>
    <property type="gene ID" value="ENSMUSG00000050425.3"/>
</dbReference>
<dbReference type="GeneID" id="243979"/>
<dbReference type="KEGG" id="mmu:243979"/>
<dbReference type="UCSC" id="uc009hat.2">
    <property type="organism name" value="mouse"/>
</dbReference>
<dbReference type="AGR" id="MGI:2441674"/>
<dbReference type="CTD" id="243979"/>
<dbReference type="MGI" id="MGI:2441674">
    <property type="gene designation" value="Mrgprb2"/>
</dbReference>
<dbReference type="VEuPathDB" id="HostDB:ENSMUSG00000050425"/>
<dbReference type="eggNOG" id="ENOG502RTWA">
    <property type="taxonomic scope" value="Eukaryota"/>
</dbReference>
<dbReference type="GeneTree" id="ENSGT01030000234639"/>
<dbReference type="HOGENOM" id="CLU_009579_4_1_1"/>
<dbReference type="InParanoid" id="Q3KNA1"/>
<dbReference type="OMA" id="WVNSSAN"/>
<dbReference type="OrthoDB" id="9631784at2759"/>
<dbReference type="PhylomeDB" id="Q3KNA1"/>
<dbReference type="TreeFam" id="TF336336"/>
<dbReference type="BioGRID-ORCS" id="243979">
    <property type="hits" value="2 hits in 76 CRISPR screens"/>
</dbReference>
<dbReference type="PRO" id="PR:Q3KNA1"/>
<dbReference type="Proteomes" id="UP000000589">
    <property type="component" value="Chromosome 7"/>
</dbReference>
<dbReference type="RNAct" id="Q3KNA1">
    <property type="molecule type" value="protein"/>
</dbReference>
<dbReference type="Bgee" id="ENSMUSG00000050425">
    <property type="expression patterns" value="Expressed in zone of skin and 6 other cell types or tissues"/>
</dbReference>
<dbReference type="ExpressionAtlas" id="Q3KNA1">
    <property type="expression patterns" value="baseline and differential"/>
</dbReference>
<dbReference type="GO" id="GO:0005886">
    <property type="term" value="C:plasma membrane"/>
    <property type="evidence" value="ECO:0007669"/>
    <property type="project" value="UniProtKB-SubCell"/>
</dbReference>
<dbReference type="GO" id="GO:0004930">
    <property type="term" value="F:G protein-coupled receptor activity"/>
    <property type="evidence" value="ECO:0007669"/>
    <property type="project" value="UniProtKB-KW"/>
</dbReference>
<dbReference type="CDD" id="cd15107">
    <property type="entry name" value="7tmA_MrgprB"/>
    <property type="match status" value="1"/>
</dbReference>
<dbReference type="FunFam" id="1.20.1070.10:FF:000140">
    <property type="entry name" value="Mas-related G-protein coupled receptor member X2"/>
    <property type="match status" value="1"/>
</dbReference>
<dbReference type="Gene3D" id="1.20.1070.10">
    <property type="entry name" value="Rhodopsin 7-helix transmembrane proteins"/>
    <property type="match status" value="1"/>
</dbReference>
<dbReference type="InterPro" id="IPR000276">
    <property type="entry name" value="GPCR_Rhodpsn"/>
</dbReference>
<dbReference type="InterPro" id="IPR017452">
    <property type="entry name" value="GPCR_Rhodpsn_7TM"/>
</dbReference>
<dbReference type="InterPro" id="IPR026234">
    <property type="entry name" value="MRGPCRFAMILY"/>
</dbReference>
<dbReference type="PANTHER" id="PTHR11334">
    <property type="entry name" value="MAS-RELATED G-PROTEIN COUPLED RECEPTOR"/>
    <property type="match status" value="1"/>
</dbReference>
<dbReference type="PANTHER" id="PTHR11334:SF29">
    <property type="entry name" value="MAS-RELATED G-PROTEIN COUPLED RECEPTOR MEMBER X2"/>
    <property type="match status" value="1"/>
</dbReference>
<dbReference type="Pfam" id="PF00001">
    <property type="entry name" value="7tm_1"/>
    <property type="match status" value="1"/>
</dbReference>
<dbReference type="PRINTS" id="PR00237">
    <property type="entry name" value="GPCRRHODOPSN"/>
</dbReference>
<dbReference type="PRINTS" id="PR02108">
    <property type="entry name" value="MRGPCRFAMILY"/>
</dbReference>
<dbReference type="SUPFAM" id="SSF81321">
    <property type="entry name" value="Family A G protein-coupled receptor-like"/>
    <property type="match status" value="1"/>
</dbReference>
<dbReference type="PROSITE" id="PS00237">
    <property type="entry name" value="G_PROTEIN_RECEP_F1_1"/>
    <property type="match status" value="1"/>
</dbReference>
<dbReference type="PROSITE" id="PS50262">
    <property type="entry name" value="G_PROTEIN_RECEP_F1_2"/>
    <property type="match status" value="1"/>
</dbReference>
<evidence type="ECO:0000255" key="1"/>
<evidence type="ECO:0000255" key="2">
    <source>
        <dbReference type="PROSITE-ProRule" id="PRU00521"/>
    </source>
</evidence>
<evidence type="ECO:0000256" key="3">
    <source>
        <dbReference type="SAM" id="MobiDB-lite"/>
    </source>
</evidence>
<evidence type="ECO:0000269" key="4">
    <source>
    </source>
</evidence>
<evidence type="ECO:0000305" key="5"/>
<sequence length="338" mass="38832">MSGDFLIKNLSTSAWKTNITVLNGSYYIDTSVCVTRNQAMILLSIIISLVGMGLNAIVLWFLGIRMHTNAFTVYILNLAMADFLYLCSQFVICLLIAFYIFYSIDINIPLVLYVVPIFAYLSGLSILSTISIERCLSVIWPIWYRCKRPRHTSAITCFVLWVMSLLLGLLEGKACGLLFNSFDSYWCETFDVITNIWSVVFFGVLCGSSLTLLVRIFCGSQRIPMTRLYVTITLTVLVFLIFGLPFGIYWILYQWISNFYYVEICNFYLEILFLSCVNSCMNPIIYFLVGSIRHRRFRRKTLKLLLQRAMQDTPEEEQSGNKSSSEHPEELETVQSCS</sequence>
<comment type="function">
    <text evidence="4">Mast cell-specific receptor for basic secretagogues, i.e. cationic amphiphilic drugs, as well as endo- or exogenous peptides, consisting of a basic head group and a hydrophobic core. Recognizes and binds small molecules containing a cyclized tetrahydroisoquinoline (THIQ), such as non-steroidal neuromuscular blocking drugs (NMBDs), including tubocurarine and atracurium. In response to these compounds, mediates pseudo-allergic reactions characterized by histamine release, inflammation and airway contraction (PubMed:25517090).</text>
</comment>
<comment type="subcellular location">
    <subcellularLocation>
        <location evidence="5">Cell membrane</location>
        <topology evidence="5">Multi-pass membrane protein</topology>
    </subcellularLocation>
</comment>
<comment type="tissue specificity">
    <text evidence="4">Mast cell-specific.</text>
</comment>
<comment type="disruption phenotype">
    <text evidence="4">No visible phenotype in normal conditions. Absence of pseudo-allergic reactions in response to small-molecule therapeutic drugs: secretagogue-induced histamine release, inflammation and airway contraction are abolished.</text>
</comment>
<comment type="similarity">
    <text evidence="2">Belongs to the G-protein coupled receptor 1 family. Mas subfamily.</text>
</comment>
<comment type="caution">
    <text evidence="4">In spite of its official gene name, this protein may be the functional ortholog of human MRGPRX2, in terms of expression pattern and pharmacology.</text>
</comment>
<accession>Q3KNA1</accession>
<accession>Q8CDY4</accession>
<accession>Q91ZC2</accession>
<keyword id="KW-1003">Cell membrane</keyword>
<keyword id="KW-0297">G-protein coupled receptor</keyword>
<keyword id="KW-0325">Glycoprotein</keyword>
<keyword id="KW-0472">Membrane</keyword>
<keyword id="KW-0675">Receptor</keyword>
<keyword id="KW-1185">Reference proteome</keyword>
<keyword id="KW-0807">Transducer</keyword>
<keyword id="KW-0812">Transmembrane</keyword>
<keyword id="KW-1133">Transmembrane helix</keyword>
<protein>
    <recommendedName>
        <fullName>Mas-related G-protein coupled receptor member B2</fullName>
    </recommendedName>
</protein>
<gene>
    <name type="primary">Mrgprb2</name>
    <name type="synonym">Mrgb2</name>
</gene>
<name>MRGB2_MOUSE</name>
<feature type="chain" id="PRO_0000304878" description="Mas-related G-protein coupled receptor member B2">
    <location>
        <begin position="1"/>
        <end position="338"/>
    </location>
</feature>
<feature type="topological domain" description="Extracellular" evidence="1">
    <location>
        <begin position="1"/>
        <end position="40"/>
    </location>
</feature>
<feature type="transmembrane region" description="Helical; Name=1" evidence="1">
    <location>
        <begin position="41"/>
        <end position="61"/>
    </location>
</feature>
<feature type="topological domain" description="Cytoplasmic" evidence="1">
    <location>
        <begin position="62"/>
        <end position="89"/>
    </location>
</feature>
<feature type="transmembrane region" description="Helical; Name=2" evidence="1">
    <location>
        <begin position="90"/>
        <end position="110"/>
    </location>
</feature>
<feature type="topological domain" description="Extracellular" evidence="1">
    <location>
        <position position="111"/>
    </location>
</feature>
<feature type="transmembrane region" description="Helical; Name=3" evidence="1">
    <location>
        <begin position="112"/>
        <end position="132"/>
    </location>
</feature>
<feature type="topological domain" description="Cytoplasmic" evidence="1">
    <location>
        <begin position="133"/>
        <end position="157"/>
    </location>
</feature>
<feature type="transmembrane region" description="Helical; Name=4" evidence="1">
    <location>
        <begin position="158"/>
        <end position="178"/>
    </location>
</feature>
<feature type="topological domain" description="Extracellular" evidence="1">
    <location>
        <begin position="179"/>
        <end position="191"/>
    </location>
</feature>
<feature type="transmembrane region" description="Helical; Name=5" evidence="1">
    <location>
        <begin position="192"/>
        <end position="212"/>
    </location>
</feature>
<feature type="topological domain" description="Cytoplasmic" evidence="1">
    <location>
        <begin position="213"/>
        <end position="231"/>
    </location>
</feature>
<feature type="transmembrane region" description="Helical; Name=6" evidence="1">
    <location>
        <begin position="232"/>
        <end position="252"/>
    </location>
</feature>
<feature type="topological domain" description="Extracellular" evidence="1">
    <location>
        <begin position="253"/>
        <end position="268"/>
    </location>
</feature>
<feature type="transmembrane region" description="Helical; Name=7" evidence="1">
    <location>
        <begin position="269"/>
        <end position="289"/>
    </location>
</feature>
<feature type="topological domain" description="Cytoplasmic" evidence="1">
    <location>
        <begin position="290"/>
        <end position="338"/>
    </location>
</feature>
<feature type="region of interest" description="Disordered" evidence="3">
    <location>
        <begin position="310"/>
        <end position="338"/>
    </location>
</feature>
<feature type="glycosylation site" description="N-linked (GlcNAc...) asparagine" evidence="1">
    <location>
        <position position="9"/>
    </location>
</feature>
<feature type="glycosylation site" description="N-linked (GlcNAc...) asparagine" evidence="1">
    <location>
        <position position="18"/>
    </location>
</feature>
<feature type="glycosylation site" description="N-linked (GlcNAc...) asparagine" evidence="1">
    <location>
        <position position="23"/>
    </location>
</feature>
<feature type="sequence conflict" description="In Ref. 2; BAC26422." evidence="5" ref="2">
    <original>I</original>
    <variation>F</variation>
    <location>
        <position position="28"/>
    </location>
</feature>
<feature type="sequence conflict" description="In Ref. 3; AAI07391/AAI07392." evidence="5" ref="3">
    <original>E</original>
    <variation>K</variation>
    <location>
        <position position="263"/>
    </location>
</feature>